<protein>
    <recommendedName>
        <fullName>Tungsten-containing formylmethanofuran dehydrogenase 2 subunit C</fullName>
        <ecNumber evidence="2">1.2.7.12</ecNumber>
    </recommendedName>
    <alternativeName>
        <fullName>Tungsten-containing formylmethanofuran dehydrogenase II subunit C</fullName>
    </alternativeName>
</protein>
<dbReference type="EC" id="1.2.7.12" evidence="2"/>
<dbReference type="EMBL" id="AE000666">
    <property type="protein sequence ID" value="AAB86032.1"/>
    <property type="molecule type" value="Genomic_DNA"/>
</dbReference>
<dbReference type="PIR" id="H69074">
    <property type="entry name" value="H69074"/>
</dbReference>
<dbReference type="RefSeq" id="WP_010877167.1">
    <property type="nucleotide sequence ID" value="NC_000916.1"/>
</dbReference>
<dbReference type="SMR" id="O27600"/>
<dbReference type="IntAct" id="O27600">
    <property type="interactions" value="2"/>
</dbReference>
<dbReference type="STRING" id="187420.MTH_1558"/>
<dbReference type="TCDB" id="3.D.8.1.1">
    <property type="family name" value="the na(+)- or h(+)-pumping formyl methanofuran dehydrogenase (fmf-dh) family"/>
</dbReference>
<dbReference type="PaxDb" id="187420-MTH_1558"/>
<dbReference type="EnsemblBacteria" id="AAB86032">
    <property type="protein sequence ID" value="AAB86032"/>
    <property type="gene ID" value="MTH_1558"/>
</dbReference>
<dbReference type="GeneID" id="1471827"/>
<dbReference type="GeneID" id="77402078"/>
<dbReference type="KEGG" id="mth:MTH_1558"/>
<dbReference type="PATRIC" id="fig|187420.15.peg.1521"/>
<dbReference type="HOGENOM" id="CLU_072248_0_0_2"/>
<dbReference type="InParanoid" id="O27600"/>
<dbReference type="UniPathway" id="UPA00640">
    <property type="reaction ID" value="UER00692"/>
</dbReference>
<dbReference type="Proteomes" id="UP000005223">
    <property type="component" value="Chromosome"/>
</dbReference>
<dbReference type="GO" id="GO:0018493">
    <property type="term" value="F:formylmethanofuran dehydrogenase activity"/>
    <property type="evidence" value="ECO:0007669"/>
    <property type="project" value="UniProtKB-EC"/>
</dbReference>
<dbReference type="GO" id="GO:0046914">
    <property type="term" value="F:transition metal ion binding"/>
    <property type="evidence" value="ECO:0007669"/>
    <property type="project" value="InterPro"/>
</dbReference>
<dbReference type="GO" id="GO:0019386">
    <property type="term" value="P:methanogenesis, from carbon dioxide"/>
    <property type="evidence" value="ECO:0007669"/>
    <property type="project" value="UniProtKB-UniPathway"/>
</dbReference>
<dbReference type="CDD" id="cd00980">
    <property type="entry name" value="FwdC/FmdC"/>
    <property type="match status" value="1"/>
</dbReference>
<dbReference type="Gene3D" id="2.160.20.60">
    <property type="entry name" value="Glutamate synthase, alpha subunit, C-terminal domain"/>
    <property type="match status" value="2"/>
</dbReference>
<dbReference type="InterPro" id="IPR054942">
    <property type="entry name" value="FMH_DH_FwdC"/>
</dbReference>
<dbReference type="InterPro" id="IPR017550">
    <property type="entry name" value="Formylmethanofuran_DH_suC"/>
</dbReference>
<dbReference type="InterPro" id="IPR036485">
    <property type="entry name" value="Glu_synth_asu_C_sf"/>
</dbReference>
<dbReference type="NCBIfam" id="NF042910">
    <property type="entry name" value="FMH_DH_FwdC"/>
    <property type="match status" value="1"/>
</dbReference>
<dbReference type="NCBIfam" id="TIGR03122">
    <property type="entry name" value="one_C_dehyd_C"/>
    <property type="match status" value="1"/>
</dbReference>
<dbReference type="PANTHER" id="PTHR39673">
    <property type="entry name" value="TUNGSTEN FORMYLMETHANOFURAN DEHYDROGENASE, SUBUNIT C (FWDC)"/>
    <property type="match status" value="1"/>
</dbReference>
<dbReference type="PANTHER" id="PTHR39673:SF5">
    <property type="entry name" value="TUNGSTEN-CONTAINING FORMYLMETHANOFURAN DEHYDROGENASE 2 SUBUNIT C"/>
    <property type="match status" value="1"/>
</dbReference>
<dbReference type="SUPFAM" id="SSF69336">
    <property type="entry name" value="Alpha subunit of glutamate synthase, C-terminal domain"/>
    <property type="match status" value="1"/>
</dbReference>
<organism>
    <name type="scientific">Methanothermobacter thermautotrophicus (strain ATCC 29096 / DSM 1053 / JCM 10044 / NBRC 100330 / Delta H)</name>
    <name type="common">Methanobacterium thermoautotrophicum</name>
    <dbReference type="NCBI Taxonomy" id="187420"/>
    <lineage>
        <taxon>Archaea</taxon>
        <taxon>Methanobacteriati</taxon>
        <taxon>Methanobacteriota</taxon>
        <taxon>Methanomada group</taxon>
        <taxon>Methanobacteria</taxon>
        <taxon>Methanobacteriales</taxon>
        <taxon>Methanobacteriaceae</taxon>
        <taxon>Methanothermobacter</taxon>
    </lineage>
</organism>
<keyword id="KW-0484">Methanogenesis</keyword>
<keyword id="KW-0560">Oxidoreductase</keyword>
<keyword id="KW-1185">Reference proteome</keyword>
<keyword id="KW-0677">Repeat</keyword>
<name>FWDC_METTH</name>
<reference key="1">
    <citation type="journal article" date="1997" name="J. Bacteriol.">
        <title>Complete genome sequence of Methanobacterium thermoautotrophicum deltaH: functional analysis and comparative genomics.</title>
        <authorList>
            <person name="Smith D.R."/>
            <person name="Doucette-Stamm L.A."/>
            <person name="Deloughery C."/>
            <person name="Lee H.-M."/>
            <person name="Dubois J."/>
            <person name="Aldredge T."/>
            <person name="Bashirzadeh R."/>
            <person name="Blakely D."/>
            <person name="Cook R."/>
            <person name="Gilbert K."/>
            <person name="Harrison D."/>
            <person name="Hoang L."/>
            <person name="Keagle P."/>
            <person name="Lumm W."/>
            <person name="Pothier B."/>
            <person name="Qiu D."/>
            <person name="Spadafora R."/>
            <person name="Vicare R."/>
            <person name="Wang Y."/>
            <person name="Wierzbowski J."/>
            <person name="Gibson R."/>
            <person name="Jiwani N."/>
            <person name="Caruso A."/>
            <person name="Bush D."/>
            <person name="Safer H."/>
            <person name="Patwell D."/>
            <person name="Prabhakar S."/>
            <person name="McDougall S."/>
            <person name="Shimer G."/>
            <person name="Goyal A."/>
            <person name="Pietrovski S."/>
            <person name="Church G.M."/>
            <person name="Daniels C.J."/>
            <person name="Mao J.-I."/>
            <person name="Rice P."/>
            <person name="Noelling J."/>
            <person name="Reeve J.N."/>
        </authorList>
    </citation>
    <scope>NUCLEOTIDE SEQUENCE [LARGE SCALE GENOMIC DNA]</scope>
    <source>
        <strain>ATCC 29096 / DSM 1053 / JCM 10044 / NBRC 100330 / Delta H</strain>
    </source>
</reference>
<gene>
    <name type="primary">fwdC</name>
    <name type="ordered locus">MTH_1558</name>
</gene>
<feature type="chain" id="PRO_0000144196" description="Tungsten-containing formylmethanofuran dehydrogenase 2 subunit C">
    <location>
        <begin position="1"/>
        <end position="270"/>
    </location>
</feature>
<feature type="repeat" description="1">
    <location>
        <begin position="80"/>
        <end position="92"/>
    </location>
</feature>
<feature type="repeat" description="2">
    <location>
        <begin position="99"/>
        <end position="111"/>
    </location>
</feature>
<feature type="repeat" description="3">
    <location>
        <begin position="118"/>
        <end position="130"/>
    </location>
</feature>
<feature type="repeat" description="4">
    <location>
        <begin position="144"/>
        <end position="156"/>
    </location>
</feature>
<feature type="repeat" description="5">
    <location>
        <begin position="163"/>
        <end position="175"/>
    </location>
</feature>
<feature type="repeat" description="6">
    <location>
        <begin position="182"/>
        <end position="194"/>
    </location>
</feature>
<feature type="repeat" description="7">
    <location>
        <begin position="201"/>
        <end position="213"/>
    </location>
</feature>
<feature type="region of interest" description="7 X 13 AA repeats of [GW]-X-X-M-X-X-G-X-[IL]-X-[IV]-X-G">
    <location>
        <begin position="80"/>
        <end position="213"/>
    </location>
</feature>
<accession>O27600</accession>
<proteinExistence type="evidence at transcript level"/>
<evidence type="ECO:0000250" key="1"/>
<evidence type="ECO:0000250" key="2">
    <source>
        <dbReference type="UniProtKB" id="Q48943"/>
    </source>
</evidence>
<evidence type="ECO:0000305" key="3"/>
<sequence length="270" mass="28641">MSEIILTPKEQPEVPLEAPNIKPDVFAGKSIDEIRNIQIMHGNEVVKLGDFFEVSGEPADSAADIKIIIDGDVYNTKRIGQDMTAGEILVKGNVNMYVGAGMKGGKITVEGNAKSWAGQDMRGGELEIFGDAGDYVGSSYRGDWRGMSGGVITVHGNAGNEIGEYMNGGKIIIKGDVNIMPGIHMNNGLIIIEGNAVARVGGEMAGGTIVVKGMIEEFLPGFKYLGVEKDIEVNGETFPGAYYKFEGDHAIKGAKGMVYAAVGCNGHIEP</sequence>
<comment type="function">
    <text evidence="2">Catalyzes the reversible oxidation of CO(2) and methanofuran (MFR) to N-formylmethanofuran (CHO-MFR). Can only oxidize formylmethanofuran. This enzyme is oxygen-labile.</text>
</comment>
<comment type="catalytic activity">
    <reaction evidence="2">
        <text>N-formylmethanofuran + 2 oxidized [2Fe-2S]-[ferredoxin] + H2O = methanofuran + 2 reduced [2Fe-2S]-[ferredoxin] + CO2 + H(+)</text>
        <dbReference type="Rhea" id="RHEA:19841"/>
        <dbReference type="Rhea" id="RHEA-COMP:10000"/>
        <dbReference type="Rhea" id="RHEA-COMP:10001"/>
        <dbReference type="ChEBI" id="CHEBI:15377"/>
        <dbReference type="ChEBI" id="CHEBI:15378"/>
        <dbReference type="ChEBI" id="CHEBI:16526"/>
        <dbReference type="ChEBI" id="CHEBI:33737"/>
        <dbReference type="ChEBI" id="CHEBI:33738"/>
        <dbReference type="ChEBI" id="CHEBI:57727"/>
        <dbReference type="ChEBI" id="CHEBI:58151"/>
        <dbReference type="EC" id="1.2.7.12"/>
    </reaction>
</comment>
<comment type="activity regulation">
    <text>Not inactivated by cyanide.</text>
</comment>
<comment type="pathway">
    <text>One-carbon metabolism; methanogenesis from CO(2); 5,10-methenyl-5,6,7,8-tetrahydromethanopterin from CO(2): step 1/3.</text>
</comment>
<comment type="subunit">
    <text evidence="1">This enzyme is composed of seven subunits FwdA (65 kDa), FwdB (53 kDa), FwdC (31 kDa), FwdD (15 kDa), FwdE, FwdF and FwdG.</text>
</comment>
<comment type="induction">
    <text>By growth on tungsten or molybdenum under anaerobic conditions.</text>
</comment>
<comment type="similarity">
    <text evidence="3">Belongs to the FwdC/FmdC family.</text>
</comment>